<accession>Q8M9Z5</accession>
<organism>
    <name type="scientific">Chaetosphaeridium globosum</name>
    <name type="common">Charophycean green alga</name>
    <name type="synonym">Herposteiron globosum</name>
    <dbReference type="NCBI Taxonomy" id="96477"/>
    <lineage>
        <taxon>Eukaryota</taxon>
        <taxon>Viridiplantae</taxon>
        <taxon>Streptophyta</taxon>
        <taxon>Coleochaetophyceae</taxon>
        <taxon>Coleochaetales</taxon>
        <taxon>Chaetosphaeridiaceae</taxon>
        <taxon>Chaetosphaeridium</taxon>
    </lineage>
</organism>
<comment type="function">
    <text evidence="2">Component of the cytochrome b6-f complex, which mediates electron transfer between photosystem II (PSII) and photosystem I (PSI), cyclic electron flow around PSI, and state transitions.</text>
</comment>
<comment type="subunit">
    <text evidence="1">The 4 large subunits of the cytochrome b6-f complex are cytochrome b6, subunit IV (17 kDa polypeptide, petD), cytochrome f and the Rieske protein, while the 4 small subunits are petG, petL, petM and petN. The complex functions as a dimer (By similarity).</text>
</comment>
<comment type="subcellular location">
    <subcellularLocation>
        <location evidence="2">Plastid</location>
        <location evidence="2">Chloroplast thylakoid membrane</location>
        <topology evidence="2">Multi-pass membrane protein</topology>
    </subcellularLocation>
</comment>
<comment type="similarity">
    <text evidence="2">Belongs to the cytochrome b family. PetD subfamily.</text>
</comment>
<gene>
    <name evidence="2" type="primary">petD</name>
</gene>
<dbReference type="EMBL" id="AF494278">
    <property type="protein sequence ID" value="AAM96528.1"/>
    <property type="molecule type" value="Genomic_DNA"/>
</dbReference>
<dbReference type="RefSeq" id="NP_683791.1">
    <property type="nucleotide sequence ID" value="NC_004115.1"/>
</dbReference>
<dbReference type="SMR" id="Q8M9Z5"/>
<dbReference type="GeneID" id="860684"/>
<dbReference type="GO" id="GO:0009535">
    <property type="term" value="C:chloroplast thylakoid membrane"/>
    <property type="evidence" value="ECO:0007669"/>
    <property type="project" value="UniProtKB-SubCell"/>
</dbReference>
<dbReference type="GO" id="GO:0005739">
    <property type="term" value="C:mitochondrion"/>
    <property type="evidence" value="ECO:0007669"/>
    <property type="project" value="GOC"/>
</dbReference>
<dbReference type="GO" id="GO:0045158">
    <property type="term" value="F:electron transporter, transferring electrons within cytochrome b6/f complex of photosystem II activity"/>
    <property type="evidence" value="ECO:0007669"/>
    <property type="project" value="UniProtKB-UniRule"/>
</dbReference>
<dbReference type="GO" id="GO:0045156">
    <property type="term" value="F:electron transporter, transferring electrons within the cyclic electron transport pathway of photosynthesis activity"/>
    <property type="evidence" value="ECO:0007669"/>
    <property type="project" value="InterPro"/>
</dbReference>
<dbReference type="GO" id="GO:0008121">
    <property type="term" value="F:ubiquinol-cytochrome-c reductase activity"/>
    <property type="evidence" value="ECO:0007669"/>
    <property type="project" value="TreeGrafter"/>
</dbReference>
<dbReference type="GO" id="GO:0006122">
    <property type="term" value="P:mitochondrial electron transport, ubiquinol to cytochrome c"/>
    <property type="evidence" value="ECO:0007669"/>
    <property type="project" value="TreeGrafter"/>
</dbReference>
<dbReference type="GO" id="GO:0009767">
    <property type="term" value="P:photosynthetic electron transport chain"/>
    <property type="evidence" value="ECO:0007669"/>
    <property type="project" value="InterPro"/>
</dbReference>
<dbReference type="CDD" id="cd00290">
    <property type="entry name" value="cytochrome_b_C"/>
    <property type="match status" value="1"/>
</dbReference>
<dbReference type="FunFam" id="1.10.287.980:FF:000001">
    <property type="entry name" value="Cytochrome b6-f complex subunit 4"/>
    <property type="match status" value="1"/>
</dbReference>
<dbReference type="FunFam" id="1.20.5.510:FF:000002">
    <property type="entry name" value="Cytochrome b6-f complex subunit 4"/>
    <property type="match status" value="1"/>
</dbReference>
<dbReference type="Gene3D" id="1.10.287.980">
    <property type="entry name" value="plastocyanin oxidoreductase"/>
    <property type="match status" value="1"/>
</dbReference>
<dbReference type="Gene3D" id="1.20.5.510">
    <property type="entry name" value="Single helix bin"/>
    <property type="match status" value="1"/>
</dbReference>
<dbReference type="HAMAP" id="MF_01344">
    <property type="entry name" value="Cytb6_f_subIV"/>
    <property type="match status" value="1"/>
</dbReference>
<dbReference type="InterPro" id="IPR005798">
    <property type="entry name" value="Cyt_b/b6_C"/>
</dbReference>
<dbReference type="InterPro" id="IPR036150">
    <property type="entry name" value="Cyt_b/b6_C_sf"/>
</dbReference>
<dbReference type="InterPro" id="IPR005870">
    <property type="entry name" value="Cyt_b6/f_cplx_suIV"/>
</dbReference>
<dbReference type="InterPro" id="IPR048260">
    <property type="entry name" value="Cytochrome_b_C_euk/bac"/>
</dbReference>
<dbReference type="NCBIfam" id="TIGR01156">
    <property type="entry name" value="cytb6_f_IV"/>
    <property type="match status" value="1"/>
</dbReference>
<dbReference type="PANTHER" id="PTHR19271">
    <property type="entry name" value="CYTOCHROME B"/>
    <property type="match status" value="1"/>
</dbReference>
<dbReference type="PANTHER" id="PTHR19271:SF41">
    <property type="entry name" value="CYTOCHROME B_B6 C-TERMINAL REGION PROFILE DOMAIN-CONTAINING PROTEIN"/>
    <property type="match status" value="1"/>
</dbReference>
<dbReference type="Pfam" id="PF00032">
    <property type="entry name" value="Cytochrom_B_C"/>
    <property type="match status" value="1"/>
</dbReference>
<dbReference type="PIRSF" id="PIRSF000033">
    <property type="entry name" value="B6f_17K"/>
    <property type="match status" value="1"/>
</dbReference>
<dbReference type="SUPFAM" id="SSF81648">
    <property type="entry name" value="a domain/subunit of cytochrome bc1 complex (Ubiquinol-cytochrome c reductase)"/>
    <property type="match status" value="1"/>
</dbReference>
<dbReference type="PROSITE" id="PS51003">
    <property type="entry name" value="CYTB_CTER"/>
    <property type="match status" value="1"/>
</dbReference>
<keyword id="KW-0150">Chloroplast</keyword>
<keyword id="KW-0249">Electron transport</keyword>
<keyword id="KW-0472">Membrane</keyword>
<keyword id="KW-0602">Photosynthesis</keyword>
<keyword id="KW-0934">Plastid</keyword>
<keyword id="KW-0793">Thylakoid</keyword>
<keyword id="KW-0812">Transmembrane</keyword>
<keyword id="KW-1133">Transmembrane helix</keyword>
<keyword id="KW-0813">Transport</keyword>
<sequence>MGVTKKPDLSDPVLRAKLAKGMGHNYYGEPAWPNDLLYIFPVCIFGTIACTVGLSVLEPVIVGEPANPFATPLEILPEWYFFPVFQILRTVPNKLLGVLLMAGVPVGLLTVPFIENVNKFQNPFRRPVATTVFLLGTVVAIWLGIGAALPIDTSLTLGLF</sequence>
<feature type="chain" id="PRO_0000061849" description="Cytochrome b6-f complex subunit 4">
    <location>
        <begin position="1"/>
        <end position="160"/>
    </location>
</feature>
<feature type="transmembrane region" description="Helical" evidence="2">
    <location>
        <begin position="36"/>
        <end position="56"/>
    </location>
</feature>
<feature type="transmembrane region" description="Helical" evidence="2">
    <location>
        <begin position="95"/>
        <end position="115"/>
    </location>
</feature>
<feature type="transmembrane region" description="Helical" evidence="2">
    <location>
        <begin position="131"/>
        <end position="151"/>
    </location>
</feature>
<protein>
    <recommendedName>
        <fullName evidence="2">Cytochrome b6-f complex subunit 4</fullName>
    </recommendedName>
    <alternativeName>
        <fullName evidence="2">17 kDa polypeptide</fullName>
    </alternativeName>
</protein>
<geneLocation type="chloroplast"/>
<name>PETD_CHAGL</name>
<proteinExistence type="inferred from homology"/>
<evidence type="ECO:0000250" key="1"/>
<evidence type="ECO:0000255" key="2">
    <source>
        <dbReference type="HAMAP-Rule" id="MF_01344"/>
    </source>
</evidence>
<reference key="1">
    <citation type="journal article" date="2002" name="Proc. Natl. Acad. Sci. U.S.A.">
        <title>The chloroplast and mitochondrial genome sequences of the charophyte Chaetosphaeridium globosum: insights into the timing of the events that restructured organelle DNAs within the green algal lineage that led to land plants.</title>
        <authorList>
            <person name="Turmel M."/>
            <person name="Otis C."/>
            <person name="Lemieux C."/>
        </authorList>
    </citation>
    <scope>NUCLEOTIDE SEQUENCE [LARGE SCALE GENOMIC DNA]</scope>
    <source>
        <strain>M1311</strain>
    </source>
</reference>